<gene>
    <name type="primary">NAP1L1</name>
    <name type="synonym">NRP</name>
</gene>
<proteinExistence type="evidence at protein level"/>
<dbReference type="EMBL" id="M86667">
    <property type="protein sequence ID" value="AAC37544.1"/>
    <property type="molecule type" value="mRNA"/>
</dbReference>
<dbReference type="EMBL" id="BT007023">
    <property type="protein sequence ID" value="AAP35669.1"/>
    <property type="molecule type" value="mRNA"/>
</dbReference>
<dbReference type="EMBL" id="AK055020">
    <property type="protein sequence ID" value="BAG51450.1"/>
    <property type="molecule type" value="mRNA"/>
</dbReference>
<dbReference type="EMBL" id="AK122670">
    <property type="protein sequence ID" value="BAG53656.1"/>
    <property type="molecule type" value="mRNA"/>
</dbReference>
<dbReference type="EMBL" id="AL162068">
    <property type="protein sequence ID" value="CAB82405.1"/>
    <property type="molecule type" value="mRNA"/>
</dbReference>
<dbReference type="EMBL" id="AC011611">
    <property type="status" value="NOT_ANNOTATED_CDS"/>
    <property type="molecule type" value="Genomic_DNA"/>
</dbReference>
<dbReference type="EMBL" id="CH471054">
    <property type="protein sequence ID" value="EAW97318.1"/>
    <property type="molecule type" value="Genomic_DNA"/>
</dbReference>
<dbReference type="EMBL" id="BC002387">
    <property type="protein sequence ID" value="AAH02387.1"/>
    <property type="molecule type" value="mRNA"/>
</dbReference>
<dbReference type="CCDS" id="CCDS9013.1">
    <molecule id="P55209-1"/>
</dbReference>
<dbReference type="PIR" id="S40510">
    <property type="entry name" value="S40510"/>
</dbReference>
<dbReference type="RefSeq" id="NP_001294853.1">
    <property type="nucleotide sequence ID" value="NM_001307924.2"/>
</dbReference>
<dbReference type="RefSeq" id="NP_001317160.1">
    <molecule id="P55209-1"/>
    <property type="nucleotide sequence ID" value="NM_001330231.2"/>
</dbReference>
<dbReference type="RefSeq" id="NP_001317161.1">
    <property type="nucleotide sequence ID" value="NM_001330232.1"/>
</dbReference>
<dbReference type="RefSeq" id="NP_004528.1">
    <molecule id="P55209-1"/>
    <property type="nucleotide sequence ID" value="NM_004537.7"/>
</dbReference>
<dbReference type="RefSeq" id="NP_631946.1">
    <molecule id="P55209-1"/>
    <property type="nucleotide sequence ID" value="NM_139207.5"/>
</dbReference>
<dbReference type="RefSeq" id="XP_011536695.1">
    <molecule id="P55209-1"/>
    <property type="nucleotide sequence ID" value="XM_011538393.3"/>
</dbReference>
<dbReference type="RefSeq" id="XP_016874827.1">
    <property type="nucleotide sequence ID" value="XM_017019338.1"/>
</dbReference>
<dbReference type="PDB" id="7BP5">
    <property type="method" value="X-ray"/>
    <property type="resolution" value="1.90 A"/>
    <property type="chains" value="C=371-377"/>
</dbReference>
<dbReference type="PDB" id="7UN3">
    <property type="method" value="EM"/>
    <property type="resolution" value="3.50 A"/>
    <property type="chains" value="B/C=2-391"/>
</dbReference>
<dbReference type="PDB" id="7UN6">
    <property type="method" value="EM"/>
    <property type="resolution" value="3.30 A"/>
    <property type="chains" value="B/C=2-391"/>
</dbReference>
<dbReference type="PDBsum" id="7BP5"/>
<dbReference type="PDBsum" id="7UN3"/>
<dbReference type="PDBsum" id="7UN6"/>
<dbReference type="EMDB" id="EMD-26612"/>
<dbReference type="EMDB" id="EMD-26614"/>
<dbReference type="SMR" id="P55209"/>
<dbReference type="BioGRID" id="110754">
    <property type="interactions" value="369"/>
</dbReference>
<dbReference type="CORUM" id="P55209"/>
<dbReference type="FunCoup" id="P55209">
    <property type="interactions" value="3751"/>
</dbReference>
<dbReference type="IntAct" id="P55209">
    <property type="interactions" value="182"/>
</dbReference>
<dbReference type="MINT" id="P55209"/>
<dbReference type="STRING" id="9606.ENSP00000477538"/>
<dbReference type="GlyGen" id="P55209">
    <property type="glycosylation" value="1 site, 1 O-linked glycan (1 site)"/>
</dbReference>
<dbReference type="iPTMnet" id="P55209"/>
<dbReference type="MetOSite" id="P55209"/>
<dbReference type="PhosphoSitePlus" id="P55209"/>
<dbReference type="SwissPalm" id="P55209"/>
<dbReference type="BioMuta" id="NAP1L1"/>
<dbReference type="DMDM" id="1709337"/>
<dbReference type="OGP" id="P55209"/>
<dbReference type="CPTAC" id="CPTAC-97"/>
<dbReference type="CPTAC" id="CPTAC-98"/>
<dbReference type="jPOST" id="P55209"/>
<dbReference type="MassIVE" id="P55209"/>
<dbReference type="PaxDb" id="9606-ENSP00000477538"/>
<dbReference type="PeptideAtlas" id="P55209"/>
<dbReference type="ProteomicsDB" id="3510"/>
<dbReference type="ProteomicsDB" id="3741"/>
<dbReference type="ProteomicsDB" id="56810">
    <molecule id="P55209-1"/>
</dbReference>
<dbReference type="Pumba" id="P55209"/>
<dbReference type="ABCD" id="P55209">
    <property type="antibodies" value="1 sequenced antibody"/>
</dbReference>
<dbReference type="Antibodypedia" id="29629">
    <property type="antibodies" value="205 antibodies from 30 providers"/>
</dbReference>
<dbReference type="DNASU" id="4673"/>
<dbReference type="Ensembl" id="ENST00000393263.7">
    <molecule id="P55209-1"/>
    <property type="protein sequence ID" value="ENSP00000376947.3"/>
    <property type="gene ID" value="ENSG00000187109.15"/>
</dbReference>
<dbReference type="Ensembl" id="ENST00000431879.7">
    <molecule id="P55209-3"/>
    <property type="protein sequence ID" value="ENSP00000409795.3"/>
    <property type="gene ID" value="ENSG00000187109.15"/>
</dbReference>
<dbReference type="Ensembl" id="ENST00000549596.5">
    <molecule id="P55209-2"/>
    <property type="protein sequence ID" value="ENSP00000447793.1"/>
    <property type="gene ID" value="ENSG00000187109.15"/>
</dbReference>
<dbReference type="Ensembl" id="ENST00000618691.5">
    <molecule id="P55209-1"/>
    <property type="protein sequence ID" value="ENSP00000477538.1"/>
    <property type="gene ID" value="ENSG00000187109.15"/>
</dbReference>
<dbReference type="GeneID" id="4673"/>
<dbReference type="KEGG" id="hsa:4673"/>
<dbReference type="MANE-Select" id="ENST00000618691.5">
    <property type="protein sequence ID" value="ENSP00000477538.1"/>
    <property type="RefSeq nucleotide sequence ID" value="NM_004537.7"/>
    <property type="RefSeq protein sequence ID" value="NP_004528.1"/>
</dbReference>
<dbReference type="UCSC" id="uc001sxw.3">
    <molecule id="P55209-1"/>
    <property type="organism name" value="human"/>
</dbReference>
<dbReference type="AGR" id="HGNC:7637"/>
<dbReference type="CTD" id="4673"/>
<dbReference type="DisGeNET" id="4673"/>
<dbReference type="GeneCards" id="NAP1L1"/>
<dbReference type="HGNC" id="HGNC:7637">
    <property type="gene designation" value="NAP1L1"/>
</dbReference>
<dbReference type="HPA" id="ENSG00000187109">
    <property type="expression patterns" value="Low tissue specificity"/>
</dbReference>
<dbReference type="MIM" id="164060">
    <property type="type" value="gene"/>
</dbReference>
<dbReference type="neXtProt" id="NX_P55209"/>
<dbReference type="OpenTargets" id="ENSG00000187109"/>
<dbReference type="PharmGKB" id="PA31439"/>
<dbReference type="VEuPathDB" id="HostDB:ENSG00000187109"/>
<dbReference type="eggNOG" id="KOG1507">
    <property type="taxonomic scope" value="Eukaryota"/>
</dbReference>
<dbReference type="GeneTree" id="ENSGT00940000153362"/>
<dbReference type="HOGENOM" id="CLU_038841_3_0_1"/>
<dbReference type="InParanoid" id="P55209"/>
<dbReference type="OMA" id="AAECKQN"/>
<dbReference type="OrthoDB" id="27325at2759"/>
<dbReference type="PAN-GO" id="P55209">
    <property type="GO annotations" value="5 GO annotations based on evolutionary models"/>
</dbReference>
<dbReference type="PhylomeDB" id="P55209"/>
<dbReference type="TreeFam" id="TF314349"/>
<dbReference type="PathwayCommons" id="P55209"/>
<dbReference type="SignaLink" id="P55209"/>
<dbReference type="BioGRID-ORCS" id="4673">
    <property type="hits" value="12 hits in 1127 CRISPR screens"/>
</dbReference>
<dbReference type="CD-CODE" id="91857CE7">
    <property type="entry name" value="Nucleolus"/>
</dbReference>
<dbReference type="ChiTaRS" id="NAP1L1">
    <property type="organism name" value="human"/>
</dbReference>
<dbReference type="GeneWiki" id="NAP1L1"/>
<dbReference type="GenomeRNAi" id="4673"/>
<dbReference type="Pharos" id="P55209">
    <property type="development level" value="Tbio"/>
</dbReference>
<dbReference type="PRO" id="PR:P55209"/>
<dbReference type="Proteomes" id="UP000005640">
    <property type="component" value="Chromosome 12"/>
</dbReference>
<dbReference type="RNAct" id="P55209">
    <property type="molecule type" value="protein"/>
</dbReference>
<dbReference type="Bgee" id="ENSG00000187109">
    <property type="expression patterns" value="Expressed in calcaneal tendon and 215 other cell types or tissues"/>
</dbReference>
<dbReference type="ExpressionAtlas" id="P55209">
    <property type="expression patterns" value="baseline and differential"/>
</dbReference>
<dbReference type="GO" id="GO:0000785">
    <property type="term" value="C:chromatin"/>
    <property type="evidence" value="ECO:0000318"/>
    <property type="project" value="GO_Central"/>
</dbReference>
<dbReference type="GO" id="GO:0005737">
    <property type="term" value="C:cytoplasm"/>
    <property type="evidence" value="ECO:0000250"/>
    <property type="project" value="UniProtKB"/>
</dbReference>
<dbReference type="GO" id="GO:0042470">
    <property type="term" value="C:melanosome"/>
    <property type="evidence" value="ECO:0007669"/>
    <property type="project" value="UniProtKB-SubCell"/>
</dbReference>
<dbReference type="GO" id="GO:0016020">
    <property type="term" value="C:membrane"/>
    <property type="evidence" value="ECO:0007005"/>
    <property type="project" value="UniProtKB"/>
</dbReference>
<dbReference type="GO" id="GO:0005634">
    <property type="term" value="C:nucleus"/>
    <property type="evidence" value="ECO:0000250"/>
    <property type="project" value="UniProtKB"/>
</dbReference>
<dbReference type="GO" id="GO:0003682">
    <property type="term" value="F:chromatin binding"/>
    <property type="evidence" value="ECO:0000318"/>
    <property type="project" value="GO_Central"/>
</dbReference>
<dbReference type="GO" id="GO:0042393">
    <property type="term" value="F:histone binding"/>
    <property type="evidence" value="ECO:0000318"/>
    <property type="project" value="GO_Central"/>
</dbReference>
<dbReference type="GO" id="GO:0140713">
    <property type="term" value="F:histone chaperone activity"/>
    <property type="evidence" value="ECO:0000314"/>
    <property type="project" value="UniProtKB"/>
</dbReference>
<dbReference type="GO" id="GO:0003723">
    <property type="term" value="F:RNA binding"/>
    <property type="evidence" value="ECO:0007005"/>
    <property type="project" value="UniProtKB"/>
</dbReference>
<dbReference type="GO" id="GO:0006260">
    <property type="term" value="P:DNA replication"/>
    <property type="evidence" value="ECO:0000304"/>
    <property type="project" value="ProtInc"/>
</dbReference>
<dbReference type="GO" id="GO:0007399">
    <property type="term" value="P:nervous system development"/>
    <property type="evidence" value="ECO:0007669"/>
    <property type="project" value="UniProtKB-KW"/>
</dbReference>
<dbReference type="GO" id="GO:0006334">
    <property type="term" value="P:nucleosome assembly"/>
    <property type="evidence" value="ECO:0000318"/>
    <property type="project" value="GO_Central"/>
</dbReference>
<dbReference type="GO" id="GO:0008284">
    <property type="term" value="P:positive regulation of cell population proliferation"/>
    <property type="evidence" value="ECO:0000304"/>
    <property type="project" value="ProtInc"/>
</dbReference>
<dbReference type="GO" id="GO:2000179">
    <property type="term" value="P:positive regulation of neural precursor cell proliferation"/>
    <property type="evidence" value="ECO:0000250"/>
    <property type="project" value="UniProtKB"/>
</dbReference>
<dbReference type="GO" id="GO:0050769">
    <property type="term" value="P:positive regulation of neurogenesis"/>
    <property type="evidence" value="ECO:0000250"/>
    <property type="project" value="UniProtKB"/>
</dbReference>
<dbReference type="FunFam" id="1.20.5.1500:FF:000001">
    <property type="entry name" value="Nucleosome assembly protein 1-like 1"/>
    <property type="match status" value="1"/>
</dbReference>
<dbReference type="FunFam" id="3.30.1120.90:FF:000001">
    <property type="entry name" value="Nucleosome assembly protein 1-like 1"/>
    <property type="match status" value="1"/>
</dbReference>
<dbReference type="Gene3D" id="1.20.5.1500">
    <property type="match status" value="1"/>
</dbReference>
<dbReference type="Gene3D" id="3.30.1120.90">
    <property type="entry name" value="Nucleosome assembly protein"/>
    <property type="match status" value="1"/>
</dbReference>
<dbReference type="InterPro" id="IPR037231">
    <property type="entry name" value="NAP-like_sf"/>
</dbReference>
<dbReference type="InterPro" id="IPR002164">
    <property type="entry name" value="NAP_family"/>
</dbReference>
<dbReference type="PANTHER" id="PTHR11875">
    <property type="entry name" value="TESTIS-SPECIFIC Y-ENCODED PROTEIN"/>
    <property type="match status" value="1"/>
</dbReference>
<dbReference type="Pfam" id="PF00956">
    <property type="entry name" value="NAP"/>
    <property type="match status" value="1"/>
</dbReference>
<dbReference type="SUPFAM" id="SSF143113">
    <property type="entry name" value="NAP-like"/>
    <property type="match status" value="1"/>
</dbReference>
<comment type="function">
    <text evidence="1 6 7 9 10 12">Histone chaperone that plays a role in the nuclear import of H2A-H2B and nucleosome assembly (PubMed:20002496, PubMed:21211722, PubMed:26841755). Also participates in several important DNA repair mechanisms: greatly enhances ERCC6-mediated chromatin remodeling which is essential for transcription-coupled nucleotide excision DNA repair (PubMed:28369616). Also stimulates homologous recombination (HR) by RAD51 and RAD54 which is essential in mitotic DNA double strand break (DSB) repair (PubMed:24798879). Plays a key role in the regulation of embryonic neurogenesis (By similarity). Promotes the proliferation of neural progenitors and inhibits neuronal differentiation during cortical development (By similarity). Regulates neurogenesis via the modulation of RASSF10; regulates RASSF10 expression by promoting SETD1A-mediated H3K4 methylation at the RASSF10 promoter (By similarity).</text>
</comment>
<comment type="function">
    <text evidence="8">(Microbial infection) Positively regulates Epstein-Barr virus reactivation in epithelial cells through the induction of viral BZLF1 expression.</text>
</comment>
<comment type="function">
    <text evidence="11">(Microbial infection) Together with human herpesvirus 8 protein LANA1, assists the proper assembly of the nucleosome on the replicated viral DNA.</text>
</comment>
<comment type="subunit">
    <text evidence="1 9 10 12">Homodimer (PubMed:26841755). The dimer binds strongly and sequentially to single and double H2A-H2B heterodimers (PubMed:26841755). Interacts with ERCC6; this interaction increases ERCC6 processivity (PubMed:28369616). Interacts with RAD54 (PubMed:24798879). Interacts with SETD1A (By similarity).</text>
</comment>
<comment type="subunit">
    <text evidence="11">(Microbial infection) Interacts with human herpesvirus 8 protein LANA1 (via N-terminus); this interaction is required for LANA1-dependent DNA replication.</text>
</comment>
<comment type="subunit">
    <text evidence="13">(Microbial infection) Interacts with hepatitis virus protein NS5A (via C-terminus); this interaction sequesters NAP1L1 in the cytoplasm, blocking its nuclear translocation.</text>
</comment>
<comment type="subunit">
    <text evidence="14">(Microbial infection) Interacts with Chikungunya virus non-structural protein 3 (via C-terminus).</text>
</comment>
<comment type="interaction">
    <interactant intactId="EBI-356392">
        <id>P55209</id>
    </interactant>
    <interactant intactId="EBI-81215">
        <id>Q92793</id>
        <label>CREBBP</label>
    </interactant>
    <organismsDiffer>false</organismsDiffer>
    <experiments>3</experiments>
</comment>
<comment type="interaction">
    <interactant intactId="EBI-356392">
        <id>P55209</id>
    </interactant>
    <interactant intactId="EBI-351007">
        <id>P36957</id>
        <label>DLST</label>
    </interactant>
    <organismsDiffer>false</organismsDiffer>
    <experiments>3</experiments>
</comment>
<comment type="interaction">
    <interactant intactId="EBI-356392">
        <id>P55209</id>
    </interactant>
    <interactant intactId="EBI-447295">
        <id>Q09472</id>
        <label>EP300</label>
    </interactant>
    <organismsDiffer>false</organismsDiffer>
    <experiments>3</experiments>
</comment>
<comment type="interaction">
    <interactant intactId="EBI-356392">
        <id>P55209</id>
    </interactant>
    <interactant intactId="EBI-7960826">
        <id>Q8NHY3</id>
        <label>GAS2L2</label>
    </interactant>
    <organismsDiffer>false</organismsDiffer>
    <experiments>3</experiments>
</comment>
<comment type="interaction">
    <interactant intactId="EBI-356392">
        <id>P55209</id>
    </interactant>
    <interactant intactId="EBI-518246">
        <id>P52333</id>
        <label>JAK3</label>
    </interactant>
    <organismsDiffer>false</organismsDiffer>
    <experiments>4</experiments>
</comment>
<comment type="interaction">
    <interactant intactId="EBI-356392">
        <id>P55209</id>
    </interactant>
    <interactant intactId="EBI-3911716">
        <id>Q9ULW6</id>
        <label>NAP1L2</label>
    </interactant>
    <organismsDiffer>false</organismsDiffer>
    <experiments>3</experiments>
</comment>
<comment type="interaction">
    <interactant intactId="EBI-356392">
        <id>P55209</id>
    </interactant>
    <interactant intactId="EBI-2255116">
        <id>Q99733</id>
        <label>NAP1L4</label>
    </interactant>
    <organismsDiffer>false</organismsDiffer>
    <experiments>4</experiments>
</comment>
<comment type="interaction">
    <interactant intactId="EBI-356392">
        <id>P55209</id>
    </interactant>
    <interactant intactId="EBI-2681496">
        <id>P10588</id>
        <label>NR2F6</label>
    </interactant>
    <organismsDiffer>false</organismsDiffer>
    <experiments>2</experiments>
</comment>
<comment type="interaction">
    <interactant intactId="EBI-356392">
        <id>P55209</id>
    </interactant>
    <interactant intactId="EBI-353254">
        <id>P62750</id>
        <label>RPL23A</label>
    </interactant>
    <organismsDiffer>false</organismsDiffer>
    <experiments>3</experiments>
</comment>
<comment type="interaction">
    <interactant intactId="EBI-356392">
        <id>P55209</id>
    </interactant>
    <interactant intactId="EBI-710997">
        <id>P54274</id>
        <label>TERF1</label>
    </interactant>
    <organismsDiffer>false</organismsDiffer>
    <experiments>2</experiments>
</comment>
<comment type="interaction">
    <interactant intactId="EBI-356392">
        <id>P55209</id>
    </interactant>
    <interactant intactId="EBI-7844656">
        <id>Q6ZVT0</id>
        <label>TTLL10</label>
    </interactant>
    <organismsDiffer>false</organismsDiffer>
    <experiments>5</experiments>
</comment>
<comment type="interaction">
    <interactant intactId="EBI-356392">
        <id>P55209</id>
    </interactant>
    <interactant intactId="EBI-6164389">
        <id>P04608</id>
        <label>tat</label>
    </interactant>
    <organismsDiffer>true</organismsDiffer>
    <experiments>6</experiments>
</comment>
<comment type="subcellular location">
    <subcellularLocation>
        <location evidence="5 6 11">Nucleus</location>
    </subcellularLocation>
    <subcellularLocation>
        <location evidence="5">Melanosome</location>
    </subcellularLocation>
    <subcellularLocation>
        <location evidence="6 13">Cytoplasm</location>
    </subcellularLocation>
    <text>Identified by mass spectrometry in melanosome fractions from stage I to stage IV.</text>
</comment>
<comment type="alternative products">
    <event type="alternative splicing"/>
    <isoform>
        <id>P55209-1</id>
        <name>1</name>
        <sequence type="displayed"/>
    </isoform>
    <isoform>
        <id>P55209-2</id>
        <name>2</name>
        <sequence type="described" ref="VSP_053909"/>
    </isoform>
    <isoform>
        <id>P55209-3</id>
        <name>3</name>
        <sequence type="described" ref="VSP_057357 VSP_057358"/>
    </isoform>
</comment>
<comment type="tissue specificity">
    <text>Ubiquitously expressed.</text>
</comment>
<comment type="domain">
    <text evidence="7">The NAP1L motif is required for the histone chaperone activity.</text>
</comment>
<comment type="domain">
    <text evidence="10">The acidic domains are probably involved in the interaction with histones.</text>
</comment>
<comment type="PTM">
    <text evidence="1 16">Monoglycylated on glutamate residues. Cannot be polyglycylated due to the absence of functional TTLL10 in human (By similarity).</text>
</comment>
<comment type="PTM">
    <text evidence="1">Polyglutamylated by TTLL4 on glutamate residues, resulting in polyglutamate chains on the gamma-carboxyl group. Both polyglutamylation and monoglycylation modifications can coexist on the same protein on adjacent residues, and lowering polyglycylation levels increases polyglutamylation, and reciprocally.</text>
</comment>
<comment type="similarity">
    <text evidence="16">Belongs to the nucleosome assembly protein (NAP) family.</text>
</comment>
<accession>P55209</accession>
<accession>B3KNT8</accession>
<accession>B3KV44</accession>
<feature type="initiator methionine" description="Removed" evidence="19">
    <location>
        <position position="1"/>
    </location>
</feature>
<feature type="chain" id="PRO_0000185652" description="Nucleosome assembly protein 1-like 1">
    <location>
        <begin position="2"/>
        <end position="388"/>
    </location>
</feature>
<feature type="propeptide" id="PRO_0000393943" description="Removed in mature form" evidence="16">
    <location>
        <begin position="389"/>
        <end position="391"/>
    </location>
</feature>
<feature type="region of interest" description="Disordered" evidence="3">
    <location>
        <begin position="1"/>
        <end position="32"/>
    </location>
</feature>
<feature type="region of interest" description="Disordered" evidence="3">
    <location>
        <begin position="132"/>
        <end position="163"/>
    </location>
</feature>
<feature type="region of interest" description="Disordered" evidence="3">
    <location>
        <begin position="346"/>
        <end position="391"/>
    </location>
</feature>
<feature type="short sequence motif" description="NAP1L motif" evidence="7">
    <location>
        <begin position="125"/>
        <end position="150"/>
    </location>
</feature>
<feature type="short sequence motif" description="Nuclear localization signal" evidence="2">
    <location>
        <begin position="273"/>
        <end position="279"/>
    </location>
</feature>
<feature type="compositionally biased region" description="Basic and acidic residues" evidence="3">
    <location>
        <begin position="1"/>
        <end position="10"/>
    </location>
</feature>
<feature type="compositionally biased region" description="Acidic residues" evidence="3">
    <location>
        <begin position="11"/>
        <end position="28"/>
    </location>
</feature>
<feature type="compositionally biased region" description="Acidic residues" evidence="3">
    <location>
        <begin position="132"/>
        <end position="143"/>
    </location>
</feature>
<feature type="compositionally biased region" description="Basic and acidic residues" evidence="3">
    <location>
        <begin position="144"/>
        <end position="163"/>
    </location>
</feature>
<feature type="compositionally biased region" description="Acidic residues" evidence="3">
    <location>
        <begin position="346"/>
        <end position="376"/>
    </location>
</feature>
<feature type="compositionally biased region" description="Basic and acidic residues" evidence="3">
    <location>
        <begin position="377"/>
        <end position="391"/>
    </location>
</feature>
<feature type="modified residue" description="N-acetylalanine" evidence="19">
    <location>
        <position position="2"/>
    </location>
</feature>
<feature type="modified residue" description="Phosphoserine" evidence="18">
    <location>
        <position position="10"/>
    </location>
</feature>
<feature type="modified residue" description="Phosphothreonine" evidence="17 18 21 22 23 25">
    <location>
        <position position="62"/>
    </location>
</feature>
<feature type="modified residue" description="Phosphothreonine" evidence="1">
    <location>
        <position position="64"/>
    </location>
</feature>
<feature type="modified residue" description="Phosphoserine" evidence="18 21 22 25">
    <location>
        <position position="69"/>
    </location>
</feature>
<feature type="modified residue" description="N6-acetyllysine" evidence="20">
    <location>
        <position position="116"/>
    </location>
</feature>
<feature type="modified residue" description="Phosphoserine" evidence="18">
    <location>
        <position position="143"/>
    </location>
</feature>
<feature type="modified residue" description="Cysteine methyl ester" evidence="16">
    <location>
        <position position="388"/>
    </location>
</feature>
<feature type="lipid moiety-binding region" description="S-farnesyl cysteine" evidence="4">
    <location>
        <position position="388"/>
    </location>
</feature>
<feature type="splice variant" id="VSP_057357" description="In isoform 3." evidence="15">
    <location>
        <begin position="1"/>
        <end position="41"/>
    </location>
</feature>
<feature type="splice variant" id="VSP_057358" description="In isoform 3." evidence="15">
    <location>
        <begin position="117"/>
        <end position="143"/>
    </location>
</feature>
<feature type="splice variant" id="VSP_053909" description="In isoform 2." evidence="15">
    <original>EGEEEGDEENDPDYDPKKDQNPAECKQQ</original>
    <variation>VMFTK</variation>
    <location>
        <begin position="364"/>
        <end position="391"/>
    </location>
</feature>
<feature type="mutagenesis site" description="Impaired binding to histones and ability to mediate histone chaperone activity." evidence="7">
    <original>E</original>
    <variation>A</variation>
    <location>
        <position position="126"/>
    </location>
</feature>
<feature type="mutagenesis site" description="Impaired binding to histones and ability to mediate histone chaperone activity." evidence="7">
    <original>E</original>
    <variation>A</variation>
    <location>
        <position position="130"/>
    </location>
</feature>
<feature type="mutagenesis site" description="Impaired binding to histones and ability to mediate histone chaperone activity." evidence="7">
    <original>W</original>
    <variation>A</variation>
    <location>
        <position position="134"/>
    </location>
</feature>
<feature type="helix" evidence="26">
    <location>
        <begin position="74"/>
        <end position="121"/>
    </location>
</feature>
<feature type="helix" evidence="26">
    <location>
        <begin position="170"/>
        <end position="177"/>
    </location>
</feature>
<feature type="helix" evidence="26">
    <location>
        <begin position="179"/>
        <end position="182"/>
    </location>
</feature>
<feature type="turn" evidence="26">
    <location>
        <begin position="187"/>
        <end position="189"/>
    </location>
</feature>
<feature type="helix" evidence="26">
    <location>
        <begin position="190"/>
        <end position="193"/>
    </location>
</feature>
<feature type="strand" evidence="26">
    <location>
        <begin position="196"/>
        <end position="203"/>
    </location>
</feature>
<feature type="strand" evidence="26">
    <location>
        <begin position="210"/>
        <end position="218"/>
    </location>
</feature>
<feature type="strand" evidence="26">
    <location>
        <begin position="222"/>
        <end position="224"/>
    </location>
</feature>
<feature type="strand" evidence="26">
    <location>
        <begin position="227"/>
        <end position="236"/>
    </location>
</feature>
<feature type="helix" evidence="26">
    <location>
        <begin position="244"/>
        <end position="246"/>
    </location>
</feature>
<feature type="strand" evidence="26">
    <location>
        <begin position="249"/>
        <end position="256"/>
    </location>
</feature>
<feature type="turn" evidence="26">
    <location>
        <begin position="264"/>
        <end position="266"/>
    </location>
</feature>
<feature type="strand" evidence="26">
    <location>
        <begin position="269"/>
        <end position="278"/>
    </location>
</feature>
<feature type="turn" evidence="26">
    <location>
        <begin position="280"/>
        <end position="282"/>
    </location>
</feature>
<feature type="strand" evidence="26">
    <location>
        <begin position="285"/>
        <end position="293"/>
    </location>
</feature>
<feature type="helix" evidence="26">
    <location>
        <begin position="297"/>
        <end position="300"/>
    </location>
</feature>
<feature type="helix" evidence="26">
    <location>
        <begin position="314"/>
        <end position="332"/>
    </location>
</feature>
<feature type="turn" evidence="26">
    <location>
        <begin position="333"/>
        <end position="337"/>
    </location>
</feature>
<feature type="helix" evidence="26">
    <location>
        <begin position="338"/>
        <end position="342"/>
    </location>
</feature>
<feature type="modified residue" description="N-acetylmethionine" evidence="24">
    <location sequence="P55209-3">
        <position position="1"/>
    </location>
</feature>
<reference key="1">
    <citation type="journal article" date="1994" name="Biochem. J.">
        <title>Molecular characterization of hNRP, a cDNA encoding a human nucleosome-assembly-protein-I-related gene product involved in the induction of cell proliferation.</title>
        <authorList>
            <person name="Simon H.-U."/>
            <person name="Mills G.B."/>
            <person name="Kozlowski M."/>
            <person name="Hogg D."/>
            <person name="Branch D."/>
            <person name="Ishimi Y."/>
            <person name="Siminovitch K.A."/>
        </authorList>
    </citation>
    <scope>NUCLEOTIDE SEQUENCE [MRNA] (ISOFORM 1)</scope>
    <source>
        <tissue>Thymus</tissue>
    </source>
</reference>
<reference key="2">
    <citation type="submission" date="2003-05" db="EMBL/GenBank/DDBJ databases">
        <title>Cloning of human full-length CDSs in BD Creator(TM) system donor vector.</title>
        <authorList>
            <person name="Kalnine N."/>
            <person name="Chen X."/>
            <person name="Rolfs A."/>
            <person name="Halleck A."/>
            <person name="Hines L."/>
            <person name="Eisenstein S."/>
            <person name="Koundinya M."/>
            <person name="Raphael J."/>
            <person name="Moreira D."/>
            <person name="Kelley T."/>
            <person name="LaBaer J."/>
            <person name="Lin Y."/>
            <person name="Phelan M."/>
            <person name="Farmer A."/>
        </authorList>
    </citation>
    <scope>NUCLEOTIDE SEQUENCE [LARGE SCALE MRNA] (ISOFORM 1)</scope>
</reference>
<reference key="3">
    <citation type="journal article" date="2004" name="Nat. Genet.">
        <title>Complete sequencing and characterization of 21,243 full-length human cDNAs.</title>
        <authorList>
            <person name="Ota T."/>
            <person name="Suzuki Y."/>
            <person name="Nishikawa T."/>
            <person name="Otsuki T."/>
            <person name="Sugiyama T."/>
            <person name="Irie R."/>
            <person name="Wakamatsu A."/>
            <person name="Hayashi K."/>
            <person name="Sato H."/>
            <person name="Nagai K."/>
            <person name="Kimura K."/>
            <person name="Makita H."/>
            <person name="Sekine M."/>
            <person name="Obayashi M."/>
            <person name="Nishi T."/>
            <person name="Shibahara T."/>
            <person name="Tanaka T."/>
            <person name="Ishii S."/>
            <person name="Yamamoto J."/>
            <person name="Saito K."/>
            <person name="Kawai Y."/>
            <person name="Isono Y."/>
            <person name="Nakamura Y."/>
            <person name="Nagahari K."/>
            <person name="Murakami K."/>
            <person name="Yasuda T."/>
            <person name="Iwayanagi T."/>
            <person name="Wagatsuma M."/>
            <person name="Shiratori A."/>
            <person name="Sudo H."/>
            <person name="Hosoiri T."/>
            <person name="Kaku Y."/>
            <person name="Kodaira H."/>
            <person name="Kondo H."/>
            <person name="Sugawara M."/>
            <person name="Takahashi M."/>
            <person name="Kanda K."/>
            <person name="Yokoi T."/>
            <person name="Furuya T."/>
            <person name="Kikkawa E."/>
            <person name="Omura Y."/>
            <person name="Abe K."/>
            <person name="Kamihara K."/>
            <person name="Katsuta N."/>
            <person name="Sato K."/>
            <person name="Tanikawa M."/>
            <person name="Yamazaki M."/>
            <person name="Ninomiya K."/>
            <person name="Ishibashi T."/>
            <person name="Yamashita H."/>
            <person name="Murakawa K."/>
            <person name="Fujimori K."/>
            <person name="Tanai H."/>
            <person name="Kimata M."/>
            <person name="Watanabe M."/>
            <person name="Hiraoka S."/>
            <person name="Chiba Y."/>
            <person name="Ishida S."/>
            <person name="Ono Y."/>
            <person name="Takiguchi S."/>
            <person name="Watanabe S."/>
            <person name="Yosida M."/>
            <person name="Hotuta T."/>
            <person name="Kusano J."/>
            <person name="Kanehori K."/>
            <person name="Takahashi-Fujii A."/>
            <person name="Hara H."/>
            <person name="Tanase T.-O."/>
            <person name="Nomura Y."/>
            <person name="Togiya S."/>
            <person name="Komai F."/>
            <person name="Hara R."/>
            <person name="Takeuchi K."/>
            <person name="Arita M."/>
            <person name="Imose N."/>
            <person name="Musashino K."/>
            <person name="Yuuki H."/>
            <person name="Oshima A."/>
            <person name="Sasaki N."/>
            <person name="Aotsuka S."/>
            <person name="Yoshikawa Y."/>
            <person name="Matsunawa H."/>
            <person name="Ichihara T."/>
            <person name="Shiohata N."/>
            <person name="Sano S."/>
            <person name="Moriya S."/>
            <person name="Momiyama H."/>
            <person name="Satoh N."/>
            <person name="Takami S."/>
            <person name="Terashima Y."/>
            <person name="Suzuki O."/>
            <person name="Nakagawa S."/>
            <person name="Senoh A."/>
            <person name="Mizoguchi H."/>
            <person name="Goto Y."/>
            <person name="Shimizu F."/>
            <person name="Wakebe H."/>
            <person name="Hishigaki H."/>
            <person name="Watanabe T."/>
            <person name="Sugiyama A."/>
            <person name="Takemoto M."/>
            <person name="Kawakami B."/>
            <person name="Yamazaki M."/>
            <person name="Watanabe K."/>
            <person name="Kumagai A."/>
            <person name="Itakura S."/>
            <person name="Fukuzumi Y."/>
            <person name="Fujimori Y."/>
            <person name="Komiyama M."/>
            <person name="Tashiro H."/>
            <person name="Tanigami A."/>
            <person name="Fujiwara T."/>
            <person name="Ono T."/>
            <person name="Yamada K."/>
            <person name="Fujii Y."/>
            <person name="Ozaki K."/>
            <person name="Hirao M."/>
            <person name="Ohmori Y."/>
            <person name="Kawabata A."/>
            <person name="Hikiji T."/>
            <person name="Kobatake N."/>
            <person name="Inagaki H."/>
            <person name="Ikema Y."/>
            <person name="Okamoto S."/>
            <person name="Okitani R."/>
            <person name="Kawakami T."/>
            <person name="Noguchi S."/>
            <person name="Itoh T."/>
            <person name="Shigeta K."/>
            <person name="Senba T."/>
            <person name="Matsumura K."/>
            <person name="Nakajima Y."/>
            <person name="Mizuno T."/>
            <person name="Morinaga M."/>
            <person name="Sasaki M."/>
            <person name="Togashi T."/>
            <person name="Oyama M."/>
            <person name="Hata H."/>
            <person name="Watanabe M."/>
            <person name="Komatsu T."/>
            <person name="Mizushima-Sugano J."/>
            <person name="Satoh T."/>
            <person name="Shirai Y."/>
            <person name="Takahashi Y."/>
            <person name="Nakagawa K."/>
            <person name="Okumura K."/>
            <person name="Nagase T."/>
            <person name="Nomura N."/>
            <person name="Kikuchi H."/>
            <person name="Masuho Y."/>
            <person name="Yamashita R."/>
            <person name="Nakai K."/>
            <person name="Yada T."/>
            <person name="Nakamura Y."/>
            <person name="Ohara O."/>
            <person name="Isogai T."/>
            <person name="Sugano S."/>
        </authorList>
    </citation>
    <scope>NUCLEOTIDE SEQUENCE [LARGE SCALE MRNA] (ISOFORMS 2 AND 3)</scope>
    <source>
        <tissue>Cerebellum</tissue>
    </source>
</reference>
<reference key="4">
    <citation type="journal article" date="2007" name="BMC Genomics">
        <title>The full-ORF clone resource of the German cDNA consortium.</title>
        <authorList>
            <person name="Bechtel S."/>
            <person name="Rosenfelder H."/>
            <person name="Duda A."/>
            <person name="Schmidt C.P."/>
            <person name="Ernst U."/>
            <person name="Wellenreuther R."/>
            <person name="Mehrle A."/>
            <person name="Schuster C."/>
            <person name="Bahr A."/>
            <person name="Bloecker H."/>
            <person name="Heubner D."/>
            <person name="Hoerlein A."/>
            <person name="Michel G."/>
            <person name="Wedler H."/>
            <person name="Koehrer K."/>
            <person name="Ottenwaelder B."/>
            <person name="Poustka A."/>
            <person name="Wiemann S."/>
            <person name="Schupp I."/>
        </authorList>
    </citation>
    <scope>NUCLEOTIDE SEQUENCE [LARGE SCALE MRNA] (ISOFORM 1)</scope>
    <source>
        <tissue>Melanoma</tissue>
    </source>
</reference>
<reference key="5">
    <citation type="journal article" date="2006" name="Nature">
        <title>The finished DNA sequence of human chromosome 12.</title>
        <authorList>
            <person name="Scherer S.E."/>
            <person name="Muzny D.M."/>
            <person name="Buhay C.J."/>
            <person name="Chen R."/>
            <person name="Cree A."/>
            <person name="Ding Y."/>
            <person name="Dugan-Rocha S."/>
            <person name="Gill R."/>
            <person name="Gunaratne P."/>
            <person name="Harris R.A."/>
            <person name="Hawes A.C."/>
            <person name="Hernandez J."/>
            <person name="Hodgson A.V."/>
            <person name="Hume J."/>
            <person name="Jackson A."/>
            <person name="Khan Z.M."/>
            <person name="Kovar-Smith C."/>
            <person name="Lewis L.R."/>
            <person name="Lozado R.J."/>
            <person name="Metzker M.L."/>
            <person name="Milosavljevic A."/>
            <person name="Miner G.R."/>
            <person name="Montgomery K.T."/>
            <person name="Morgan M.B."/>
            <person name="Nazareth L.V."/>
            <person name="Scott G."/>
            <person name="Sodergren E."/>
            <person name="Song X.-Z."/>
            <person name="Steffen D."/>
            <person name="Lovering R.C."/>
            <person name="Wheeler D.A."/>
            <person name="Worley K.C."/>
            <person name="Yuan Y."/>
            <person name="Zhang Z."/>
            <person name="Adams C.Q."/>
            <person name="Ansari-Lari M.A."/>
            <person name="Ayele M."/>
            <person name="Brown M.J."/>
            <person name="Chen G."/>
            <person name="Chen Z."/>
            <person name="Clerc-Blankenburg K.P."/>
            <person name="Davis C."/>
            <person name="Delgado O."/>
            <person name="Dinh H.H."/>
            <person name="Draper H."/>
            <person name="Gonzalez-Garay M.L."/>
            <person name="Havlak P."/>
            <person name="Jackson L.R."/>
            <person name="Jacob L.S."/>
            <person name="Kelly S.H."/>
            <person name="Li L."/>
            <person name="Li Z."/>
            <person name="Liu J."/>
            <person name="Liu W."/>
            <person name="Lu J."/>
            <person name="Maheshwari M."/>
            <person name="Nguyen B.-V."/>
            <person name="Okwuonu G.O."/>
            <person name="Pasternak S."/>
            <person name="Perez L.M."/>
            <person name="Plopper F.J.H."/>
            <person name="Santibanez J."/>
            <person name="Shen H."/>
            <person name="Tabor P.E."/>
            <person name="Verduzco D."/>
            <person name="Waldron L."/>
            <person name="Wang Q."/>
            <person name="Williams G.A."/>
            <person name="Zhang J."/>
            <person name="Zhou J."/>
            <person name="Allen C.C."/>
            <person name="Amin A.G."/>
            <person name="Anyalebechi V."/>
            <person name="Bailey M."/>
            <person name="Barbaria J.A."/>
            <person name="Bimage K.E."/>
            <person name="Bryant N.P."/>
            <person name="Burch P.E."/>
            <person name="Burkett C.E."/>
            <person name="Burrell K.L."/>
            <person name="Calderon E."/>
            <person name="Cardenas V."/>
            <person name="Carter K."/>
            <person name="Casias K."/>
            <person name="Cavazos I."/>
            <person name="Cavazos S.R."/>
            <person name="Ceasar H."/>
            <person name="Chacko J."/>
            <person name="Chan S.N."/>
            <person name="Chavez D."/>
            <person name="Christopoulos C."/>
            <person name="Chu J."/>
            <person name="Cockrell R."/>
            <person name="Cox C.D."/>
            <person name="Dang M."/>
            <person name="Dathorne S.R."/>
            <person name="David R."/>
            <person name="Davis C.M."/>
            <person name="Davy-Carroll L."/>
            <person name="Deshazo D.R."/>
            <person name="Donlin J.E."/>
            <person name="D'Souza L."/>
            <person name="Eaves K.A."/>
            <person name="Egan A."/>
            <person name="Emery-Cohen A.J."/>
            <person name="Escotto M."/>
            <person name="Flagg N."/>
            <person name="Forbes L.D."/>
            <person name="Gabisi A.M."/>
            <person name="Garza M."/>
            <person name="Hamilton C."/>
            <person name="Henderson N."/>
            <person name="Hernandez O."/>
            <person name="Hines S."/>
            <person name="Hogues M.E."/>
            <person name="Huang M."/>
            <person name="Idlebird D.G."/>
            <person name="Johnson R."/>
            <person name="Jolivet A."/>
            <person name="Jones S."/>
            <person name="Kagan R."/>
            <person name="King L.M."/>
            <person name="Leal B."/>
            <person name="Lebow H."/>
            <person name="Lee S."/>
            <person name="LeVan J.M."/>
            <person name="Lewis L.C."/>
            <person name="London P."/>
            <person name="Lorensuhewa L.M."/>
            <person name="Loulseged H."/>
            <person name="Lovett D.A."/>
            <person name="Lucier A."/>
            <person name="Lucier R.L."/>
            <person name="Ma J."/>
            <person name="Madu R.C."/>
            <person name="Mapua P."/>
            <person name="Martindale A.D."/>
            <person name="Martinez E."/>
            <person name="Massey E."/>
            <person name="Mawhiney S."/>
            <person name="Meador M.G."/>
            <person name="Mendez S."/>
            <person name="Mercado C."/>
            <person name="Mercado I.C."/>
            <person name="Merritt C.E."/>
            <person name="Miner Z.L."/>
            <person name="Minja E."/>
            <person name="Mitchell T."/>
            <person name="Mohabbat F."/>
            <person name="Mohabbat K."/>
            <person name="Montgomery B."/>
            <person name="Moore N."/>
            <person name="Morris S."/>
            <person name="Munidasa M."/>
            <person name="Ngo R.N."/>
            <person name="Nguyen N.B."/>
            <person name="Nickerson E."/>
            <person name="Nwaokelemeh O.O."/>
            <person name="Nwokenkwo S."/>
            <person name="Obregon M."/>
            <person name="Oguh M."/>
            <person name="Oragunye N."/>
            <person name="Oviedo R.J."/>
            <person name="Parish B.J."/>
            <person name="Parker D.N."/>
            <person name="Parrish J."/>
            <person name="Parks K.L."/>
            <person name="Paul H.A."/>
            <person name="Payton B.A."/>
            <person name="Perez A."/>
            <person name="Perrin W."/>
            <person name="Pickens A."/>
            <person name="Primus E.L."/>
            <person name="Pu L.-L."/>
            <person name="Puazo M."/>
            <person name="Quiles M.M."/>
            <person name="Quiroz J.B."/>
            <person name="Rabata D."/>
            <person name="Reeves K."/>
            <person name="Ruiz S.J."/>
            <person name="Shao H."/>
            <person name="Sisson I."/>
            <person name="Sonaike T."/>
            <person name="Sorelle R.P."/>
            <person name="Sutton A.E."/>
            <person name="Svatek A.F."/>
            <person name="Svetz L.A."/>
            <person name="Tamerisa K.S."/>
            <person name="Taylor T.R."/>
            <person name="Teague B."/>
            <person name="Thomas N."/>
            <person name="Thorn R.D."/>
            <person name="Trejos Z.Y."/>
            <person name="Trevino B.K."/>
            <person name="Ukegbu O.N."/>
            <person name="Urban J.B."/>
            <person name="Vasquez L.I."/>
            <person name="Vera V.A."/>
            <person name="Villasana D.M."/>
            <person name="Wang L."/>
            <person name="Ward-Moore S."/>
            <person name="Warren J.T."/>
            <person name="Wei X."/>
            <person name="White F."/>
            <person name="Williamson A.L."/>
            <person name="Wleczyk R."/>
            <person name="Wooden H.S."/>
            <person name="Wooden S.H."/>
            <person name="Yen J."/>
            <person name="Yoon L."/>
            <person name="Yoon V."/>
            <person name="Zorrilla S.E."/>
            <person name="Nelson D."/>
            <person name="Kucherlapati R."/>
            <person name="Weinstock G."/>
            <person name="Gibbs R.A."/>
        </authorList>
    </citation>
    <scope>NUCLEOTIDE SEQUENCE [LARGE SCALE GENOMIC DNA]</scope>
</reference>
<reference key="6">
    <citation type="submission" date="2005-07" db="EMBL/GenBank/DDBJ databases">
        <authorList>
            <person name="Mural R.J."/>
            <person name="Istrail S."/>
            <person name="Sutton G."/>
            <person name="Florea L."/>
            <person name="Halpern A.L."/>
            <person name="Mobarry C.M."/>
            <person name="Lippert R."/>
            <person name="Walenz B."/>
            <person name="Shatkay H."/>
            <person name="Dew I."/>
            <person name="Miller J.R."/>
            <person name="Flanigan M.J."/>
            <person name="Edwards N.J."/>
            <person name="Bolanos R."/>
            <person name="Fasulo D."/>
            <person name="Halldorsson B.V."/>
            <person name="Hannenhalli S."/>
            <person name="Turner R."/>
            <person name="Yooseph S."/>
            <person name="Lu F."/>
            <person name="Nusskern D.R."/>
            <person name="Shue B.C."/>
            <person name="Zheng X.H."/>
            <person name="Zhong F."/>
            <person name="Delcher A.L."/>
            <person name="Huson D.H."/>
            <person name="Kravitz S.A."/>
            <person name="Mouchard L."/>
            <person name="Reinert K."/>
            <person name="Remington K.A."/>
            <person name="Clark A.G."/>
            <person name="Waterman M.S."/>
            <person name="Eichler E.E."/>
            <person name="Adams M.D."/>
            <person name="Hunkapiller M.W."/>
            <person name="Myers E.W."/>
            <person name="Venter J.C."/>
        </authorList>
    </citation>
    <scope>NUCLEOTIDE SEQUENCE [LARGE SCALE GENOMIC DNA]</scope>
</reference>
<reference key="7">
    <citation type="journal article" date="2004" name="Genome Res.">
        <title>The status, quality, and expansion of the NIH full-length cDNA project: the Mammalian Gene Collection (MGC).</title>
        <authorList>
            <consortium name="The MGC Project Team"/>
        </authorList>
    </citation>
    <scope>NUCLEOTIDE SEQUENCE [LARGE SCALE MRNA] (ISOFORM 1)</scope>
    <source>
        <tissue>Muscle</tissue>
    </source>
</reference>
<reference key="8">
    <citation type="journal article" date="2003" name="Nature">
        <title>Proteomic characterization of the human centrosome by protein correlation profiling.</title>
        <authorList>
            <person name="Andersen J.S."/>
            <person name="Wilkinson C.J."/>
            <person name="Mayor T."/>
            <person name="Mortensen P."/>
            <person name="Nigg E.A."/>
            <person name="Mann M."/>
        </authorList>
    </citation>
    <scope>IDENTIFICATION BY MASS SPECTROMETRY</scope>
    <source>
        <tissue>Lymphoblast</tissue>
    </source>
</reference>
<reference key="9">
    <citation type="journal article" date="2004" name="Proc. Natl. Acad. Sci. U.S.A.">
        <title>A tagging-via-substrate technology for detection and proteomics of farnesylated proteins.</title>
        <authorList>
            <person name="Kho Y."/>
            <person name="Kim S.C."/>
            <person name="Jiang C."/>
            <person name="Barma D."/>
            <person name="Kwon S.W."/>
            <person name="Cheng J."/>
            <person name="Jaunbergs J."/>
            <person name="Weinbaum C."/>
            <person name="Tamanoi F."/>
            <person name="Falck J."/>
            <person name="Zhao Y."/>
        </authorList>
    </citation>
    <scope>ISOPRENYLATION AT CYS-388</scope>
</reference>
<reference key="10">
    <citation type="journal article" date="2006" name="Cell">
        <title>Global, in vivo, and site-specific phosphorylation dynamics in signaling networks.</title>
        <authorList>
            <person name="Olsen J.V."/>
            <person name="Blagoev B."/>
            <person name="Gnad F."/>
            <person name="Macek B."/>
            <person name="Kumar C."/>
            <person name="Mortensen P."/>
            <person name="Mann M."/>
        </authorList>
    </citation>
    <scope>IDENTIFICATION BY MASS SPECTROMETRY [LARGE SCALE ANALYSIS]</scope>
    <source>
        <tissue>Cervix carcinoma</tissue>
    </source>
</reference>
<reference key="11">
    <citation type="journal article" date="2006" name="J. Proteome Res.">
        <title>Proteomic and bioinformatic characterization of the biogenesis and function of melanosomes.</title>
        <authorList>
            <person name="Chi A."/>
            <person name="Valencia J.C."/>
            <person name="Hu Z.-Z."/>
            <person name="Watabe H."/>
            <person name="Yamaguchi H."/>
            <person name="Mangini N.J."/>
            <person name="Huang H."/>
            <person name="Canfield V.A."/>
            <person name="Cheng K.C."/>
            <person name="Yang F."/>
            <person name="Abe R."/>
            <person name="Yamagishi S."/>
            <person name="Shabanowitz J."/>
            <person name="Hearing V.J."/>
            <person name="Wu C."/>
            <person name="Appella E."/>
            <person name="Hunt D.F."/>
        </authorList>
    </citation>
    <scope>SUBCELLULAR LOCATION [LARGE SCALE ANALYSIS]</scope>
    <source>
        <tissue>Melanoma</tissue>
    </source>
</reference>
<reference key="12">
    <citation type="journal article" date="2006" name="Nat. Biotechnol.">
        <title>A probability-based approach for high-throughput protein phosphorylation analysis and site localization.</title>
        <authorList>
            <person name="Beausoleil S.A."/>
            <person name="Villen J."/>
            <person name="Gerber S.A."/>
            <person name="Rush J."/>
            <person name="Gygi S.P."/>
        </authorList>
    </citation>
    <scope>PHOSPHORYLATION [LARGE SCALE ANALYSIS] AT THR-62</scope>
    <scope>IDENTIFICATION BY MASS SPECTROMETRY [LARGE SCALE ANALYSIS]</scope>
    <source>
        <tissue>Cervix carcinoma</tissue>
    </source>
</reference>
<reference key="13">
    <citation type="journal article" date="2007" name="J. Proteome Res.">
        <title>Improved titanium dioxide enrichment of phosphopeptides from HeLa cells and high confident phosphopeptide identification by cross-validation of MS/MS and MS/MS/MS spectra.</title>
        <authorList>
            <person name="Yu L.R."/>
            <person name="Zhu Z."/>
            <person name="Chan K.C."/>
            <person name="Issaq H.J."/>
            <person name="Dimitrov D.S."/>
            <person name="Veenstra T.D."/>
        </authorList>
    </citation>
    <scope>IDENTIFICATION BY MASS SPECTROMETRY [LARGE SCALE ANALYSIS]</scope>
    <source>
        <tissue>Cervix carcinoma</tissue>
    </source>
</reference>
<reference key="14">
    <citation type="journal article" date="2008" name="Proc. Natl. Acad. Sci. U.S.A.">
        <title>A quantitative atlas of mitotic phosphorylation.</title>
        <authorList>
            <person name="Dephoure N."/>
            <person name="Zhou C."/>
            <person name="Villen J."/>
            <person name="Beausoleil S.A."/>
            <person name="Bakalarski C.E."/>
            <person name="Elledge S.J."/>
            <person name="Gygi S.P."/>
        </authorList>
    </citation>
    <scope>PHOSPHORYLATION [LARGE SCALE ANALYSIS] AT SER-10; THR-62; SER-69 AND SER-143</scope>
    <scope>IDENTIFICATION BY MASS SPECTROMETRY [LARGE SCALE ANALYSIS]</scope>
    <source>
        <tissue>Cervix carcinoma</tissue>
    </source>
</reference>
<reference key="15">
    <citation type="journal article" date="2008" name="Retrovirology">
        <title>The histone chaperone protein Nucleosome Assembly Protein-1 (hNAP-1) binds HIV-1 Tat and promotes viral transcription.</title>
        <authorList>
            <person name="Vardabasso C."/>
            <person name="Manganaro L."/>
            <person name="Lusic M."/>
            <person name="Marcello A."/>
            <person name="Giacca M."/>
        </authorList>
    </citation>
    <scope>INTERACTION WITH HIV-1 TAT (MICROBIAL INFECTION)</scope>
</reference>
<reference key="16">
    <citation type="journal article" date="2009" name="Anal. Chem.">
        <title>Lys-N and trypsin cover complementary parts of the phosphoproteome in a refined SCX-based approach.</title>
        <authorList>
            <person name="Gauci S."/>
            <person name="Helbig A.O."/>
            <person name="Slijper M."/>
            <person name="Krijgsveld J."/>
            <person name="Heck A.J."/>
            <person name="Mohammed S."/>
        </authorList>
    </citation>
    <scope>ACETYLATION [LARGE SCALE ANALYSIS] AT ALA-2</scope>
    <scope>CLEAVAGE OF INITIATOR METHIONINE [LARGE SCALE ANALYSIS]</scope>
    <scope>IDENTIFICATION BY MASS SPECTROMETRY [LARGE SCALE ANALYSIS]</scope>
</reference>
<reference key="17">
    <citation type="journal article" date="2009" name="Sci. Signal.">
        <title>Quantitative phosphoproteomic analysis of T cell receptor signaling reveals system-wide modulation of protein-protein interactions.</title>
        <authorList>
            <person name="Mayya V."/>
            <person name="Lundgren D.H."/>
            <person name="Hwang S.-I."/>
            <person name="Rezaul K."/>
            <person name="Wu L."/>
            <person name="Eng J.K."/>
            <person name="Rodionov V."/>
            <person name="Han D.K."/>
        </authorList>
    </citation>
    <scope>PHOSPHORYLATION [LARGE SCALE ANALYSIS] AT THR-62 AND SER-69</scope>
    <scope>IDENTIFICATION BY MASS SPECTROMETRY [LARGE SCALE ANALYSIS]</scope>
    <source>
        <tissue>Leukemic T-cell</tissue>
    </source>
</reference>
<reference key="18">
    <citation type="journal article" date="2009" name="Science">
        <title>Lysine acetylation targets protein complexes and co-regulates major cellular functions.</title>
        <authorList>
            <person name="Choudhary C."/>
            <person name="Kumar C."/>
            <person name="Gnad F."/>
            <person name="Nielsen M.L."/>
            <person name="Rehman M."/>
            <person name="Walther T.C."/>
            <person name="Olsen J.V."/>
            <person name="Mann M."/>
        </authorList>
    </citation>
    <scope>ACETYLATION [LARGE SCALE ANALYSIS] AT LYS-116</scope>
    <scope>IDENTIFICATION BY MASS SPECTROMETRY [LARGE SCALE ANALYSIS]</scope>
</reference>
<reference key="19">
    <citation type="journal article" date="2010" name="Sci. Signal.">
        <title>Quantitative phosphoproteomics reveals widespread full phosphorylation site occupancy during mitosis.</title>
        <authorList>
            <person name="Olsen J.V."/>
            <person name="Vermeulen M."/>
            <person name="Santamaria A."/>
            <person name="Kumar C."/>
            <person name="Miller M.L."/>
            <person name="Jensen L.J."/>
            <person name="Gnad F."/>
            <person name="Cox J."/>
            <person name="Jensen T.S."/>
            <person name="Nigg E.A."/>
            <person name="Brunak S."/>
            <person name="Mann M."/>
        </authorList>
    </citation>
    <scope>PHOSPHORYLATION [LARGE SCALE ANALYSIS] AT THR-62 AND SER-69</scope>
    <scope>IDENTIFICATION BY MASS SPECTROMETRY [LARGE SCALE ANALYSIS]</scope>
    <source>
        <tissue>Cervix carcinoma</tissue>
    </source>
</reference>
<reference key="20">
    <citation type="journal article" date="2010" name="Genes Cells">
        <title>Functional characterization of human nucleosome assembly protein 1-like proteins as histone chaperones.</title>
        <authorList>
            <person name="Okuwaki M."/>
            <person name="Kato K."/>
            <person name="Nagata K."/>
        </authorList>
    </citation>
    <scope>FUNCTION</scope>
    <scope>SUBCELLULAR LOCATION</scope>
    <scope>INTERACTION WITH HISTONES H2A AND H2B</scope>
</reference>
<reference key="21">
    <citation type="journal article" date="2011" name="BMC Syst. Biol.">
        <title>Initial characterization of the human central proteome.</title>
        <authorList>
            <person name="Burkard T.R."/>
            <person name="Planyavsky M."/>
            <person name="Kaupe I."/>
            <person name="Breitwieser F.P."/>
            <person name="Buerckstuemmer T."/>
            <person name="Bennett K.L."/>
            <person name="Superti-Furga G."/>
            <person name="Colinge J."/>
        </authorList>
    </citation>
    <scope>IDENTIFICATION BY MASS SPECTROMETRY [LARGE SCALE ANALYSIS]</scope>
</reference>
<reference key="22">
    <citation type="journal article" date="2011" name="Mol. Cell">
        <title>DNA repair factor APLF is a histone chaperone.</title>
        <authorList>
            <person name="Mehrotra P.V."/>
            <person name="Ahel D."/>
            <person name="Ryan D.P."/>
            <person name="Weston R."/>
            <person name="Wiechens N."/>
            <person name="Kraehenbuehl R."/>
            <person name="Owen-Hughes T."/>
            <person name="Ahel I."/>
        </authorList>
    </citation>
    <scope>FUNCTION</scope>
    <scope>MOTIF</scope>
    <scope>MUTAGENESIS OF GLU-126; GLU-130 AND TRP-134</scope>
</reference>
<reference key="23">
    <citation type="journal article" date="2011" name="Sci. Signal.">
        <title>System-wide temporal characterization of the proteome and phosphoproteome of human embryonic stem cell differentiation.</title>
        <authorList>
            <person name="Rigbolt K.T."/>
            <person name="Prokhorova T.A."/>
            <person name="Akimov V."/>
            <person name="Henningsen J."/>
            <person name="Johansen P.T."/>
            <person name="Kratchmarova I."/>
            <person name="Kassem M."/>
            <person name="Mann M."/>
            <person name="Olsen J.V."/>
            <person name="Blagoev B."/>
        </authorList>
    </citation>
    <scope>PHOSPHORYLATION [LARGE SCALE ANALYSIS] AT THR-62</scope>
    <scope>IDENTIFICATION BY MASS SPECTROMETRY [LARGE SCALE ANALYSIS]</scope>
</reference>
<reference key="24">
    <citation type="journal article" date="2012" name="Proc. Natl. Acad. Sci. U.S.A.">
        <title>N-terminal acetylome analyses and functional insights of the N-terminal acetyltransferase NatB.</title>
        <authorList>
            <person name="Van Damme P."/>
            <person name="Lasa M."/>
            <person name="Polevoda B."/>
            <person name="Gazquez C."/>
            <person name="Elosegui-Artola A."/>
            <person name="Kim D.S."/>
            <person name="De Juan-Pardo E."/>
            <person name="Demeyer K."/>
            <person name="Hole K."/>
            <person name="Larrea E."/>
            <person name="Timmerman E."/>
            <person name="Prieto J."/>
            <person name="Arnesen T."/>
            <person name="Sherman F."/>
            <person name="Gevaert K."/>
            <person name="Aldabe R."/>
        </authorList>
    </citation>
    <scope>ACETYLATION [LARGE SCALE ANALYSIS] AT MET-1 (ISOFORM 3)</scope>
    <scope>IDENTIFICATION BY MASS SPECTROMETRY [LARGE SCALE ANALYSIS]</scope>
</reference>
<reference key="25">
    <citation type="journal article" date="2013" name="PLoS ONE">
        <title>A role for the nucleosome assembly proteins TAF-Ibeta and NAP1 in the activation of BZLF1 expression and Epstein-Barr virus reactivation.</title>
        <authorList>
            <person name="Mansouri S."/>
            <person name="Wang S."/>
            <person name="Frappier L."/>
        </authorList>
    </citation>
    <scope>FUNCTION (MICROBIAL INFECTION)</scope>
</reference>
<reference key="26">
    <citation type="journal article" date="2013" name="J. Proteome Res.">
        <title>Toward a comprehensive characterization of a human cancer cell phosphoproteome.</title>
        <authorList>
            <person name="Zhou H."/>
            <person name="Di Palma S."/>
            <person name="Preisinger C."/>
            <person name="Peng M."/>
            <person name="Polat A.N."/>
            <person name="Heck A.J."/>
            <person name="Mohammed S."/>
        </authorList>
    </citation>
    <scope>PHOSPHORYLATION [LARGE SCALE ANALYSIS] AT THR-62 AND SER-69</scope>
    <scope>IDENTIFICATION BY MASS SPECTROMETRY [LARGE SCALE ANALYSIS]</scope>
    <source>
        <tissue>Cervix carcinoma</tissue>
        <tissue>Erythroleukemia</tissue>
    </source>
</reference>
<reference key="27">
    <citation type="journal article" date="2014" name="Sci. Rep.">
        <title>Nap1 stimulates homologous recombination by RAD51 and RAD54 in higher-ordered chromatin containing histone H1.</title>
        <authorList>
            <person name="Machida S."/>
            <person name="Takaku M."/>
            <person name="Ikura M."/>
            <person name="Sun J."/>
            <person name="Suzuki H."/>
            <person name="Kobayashi W."/>
            <person name="Kinomura A."/>
            <person name="Osakabe A."/>
            <person name="Tachiwana H."/>
            <person name="Horikoshi Y."/>
            <person name="Fukuto A."/>
            <person name="Matsuda R."/>
            <person name="Ura K."/>
            <person name="Tashiro S."/>
            <person name="Ikura T."/>
            <person name="Kurumizaka H."/>
        </authorList>
    </citation>
    <scope>FUNCTION</scope>
    <scope>INTERACTION WITH RAD54</scope>
</reference>
<reference key="28">
    <citation type="journal article" date="2014" name="J. Proteomics">
        <title>An enzyme assisted RP-RPLC approach for in-depth analysis of human liver phosphoproteome.</title>
        <authorList>
            <person name="Bian Y."/>
            <person name="Song C."/>
            <person name="Cheng K."/>
            <person name="Dong M."/>
            <person name="Wang F."/>
            <person name="Huang J."/>
            <person name="Sun D."/>
            <person name="Wang L."/>
            <person name="Ye M."/>
            <person name="Zou H."/>
        </authorList>
    </citation>
    <scope>IDENTIFICATION BY MASS SPECTROMETRY [LARGE SCALE ANALYSIS]</scope>
    <source>
        <tissue>Liver</tissue>
    </source>
</reference>
<reference key="29">
    <citation type="journal article" date="2015" name="Proteomics">
        <title>N-terminome analysis of the human mitochondrial proteome.</title>
        <authorList>
            <person name="Vaca Jacome A.S."/>
            <person name="Rabilloud T."/>
            <person name="Schaeffer-Reiss C."/>
            <person name="Rompais M."/>
            <person name="Ayoub D."/>
            <person name="Lane L."/>
            <person name="Bairoch A."/>
            <person name="Van Dorsselaer A."/>
            <person name="Carapito C."/>
        </authorList>
    </citation>
    <scope>IDENTIFICATION BY MASS SPECTROMETRY [LARGE SCALE ANALYSIS]</scope>
</reference>
<reference key="30">
    <citation type="journal article" date="2016" name="Sci. Rep.">
        <title>KSHV encoded LANA recruits Nucleosome Assembly Protein NAP1L1 for regulating viral DNA replication and transcription.</title>
        <authorList>
            <person name="Gupta N."/>
            <person name="Thakker S."/>
            <person name="Verma S.C."/>
        </authorList>
    </citation>
    <scope>FUNCTION (MICROBIAL INFECTION)</scope>
    <scope>INTERACTION WITH HUMAN HERPESVIRUS 8 PROTEIN LANA1 (MICROBIAL INFECTION)</scope>
    <scope>SUBCELLULAR LOCATION</scope>
</reference>
<reference key="31">
    <citation type="journal article" date="2016" name="Genes Cells">
        <title>C-terminal acidic domain of histone chaperone human NAP1 is an efficient binding assistant for histone H2A-H2B, but not H3-H4.</title>
        <authorList>
            <person name="Ohtomo H."/>
            <person name="Akashi S."/>
            <person name="Moriwaki Y."/>
            <person name="Okuwaki M."/>
            <person name="Osakabe A."/>
            <person name="Nagata K."/>
            <person name="Kurumizaka H."/>
            <person name="Nishimura Y."/>
        </authorList>
    </citation>
    <scope>FUNCTION</scope>
    <scope>INTERACTION WITH H2A AND HA2B</scope>
    <scope>SUBUNIT</scope>
</reference>
<reference key="32">
    <citation type="journal article" date="2017" name="J. Virol.">
        <title>Hepatitis C Virus NS5A Targets Nucleosome Assembly Protein NAP1L1 To Control the Innate Cellular Response.</title>
        <authorList>
            <person name="Cevik R.E."/>
            <person name="Cesarec M."/>
            <person name="Da Silva Filipe A."/>
            <person name="Licastro D."/>
            <person name="McLauchlan J."/>
            <person name="Marcello A."/>
        </authorList>
    </citation>
    <scope>INTERACTION WITH HEPATITIS C VIRUS PROTEIN NS5A (MICROBIAL INFECTION)</scope>
    <scope>SUBCELLULAR LOCATION</scope>
</reference>
<reference key="33">
    <citation type="journal article" date="2017" name="Nucleic Acids Res.">
        <title>NAP1L1 accelerates activation and decreases pausing to enhance nucleosome remodeling by CSB.</title>
        <authorList>
            <person name="Lee J.Y."/>
            <person name="Lake R.J."/>
            <person name="Kirk J."/>
            <person name="Bohr V.A."/>
            <person name="Fan H.Y."/>
            <person name="Hohng S."/>
        </authorList>
    </citation>
    <scope>FUNCTION</scope>
    <scope>INTERACTION WITH ERCC6</scope>
</reference>
<reference key="34">
    <citation type="journal article" date="2018" name="J. Virol.">
        <title>Multiple Host Factors Interact with the Hypervariable Domain of Chikungunya Virus nsP3 and Determine Viral Replication in Cell-Specific Mode.</title>
        <authorList>
            <person name="Meshram C.D."/>
            <person name="Agback P."/>
            <person name="Shiliaev N."/>
            <person name="Urakova N."/>
            <person name="Mobley J.A."/>
            <person name="Agback T."/>
            <person name="Frolova E.I."/>
            <person name="Frolov I."/>
        </authorList>
    </citation>
    <scope>INTERACTION WITH CHIKUNGUNYA VIRUS NON-STRUCTURAL PROTEIN 3 (MICROBIAL INFECTION)</scope>
</reference>
<evidence type="ECO:0000250" key="1">
    <source>
        <dbReference type="UniProtKB" id="P28656"/>
    </source>
</evidence>
<evidence type="ECO:0000255" key="2"/>
<evidence type="ECO:0000256" key="3">
    <source>
        <dbReference type="SAM" id="MobiDB-lite"/>
    </source>
</evidence>
<evidence type="ECO:0000269" key="4">
    <source>
    </source>
</evidence>
<evidence type="ECO:0000269" key="5">
    <source>
    </source>
</evidence>
<evidence type="ECO:0000269" key="6">
    <source>
    </source>
</evidence>
<evidence type="ECO:0000269" key="7">
    <source>
    </source>
</evidence>
<evidence type="ECO:0000269" key="8">
    <source>
    </source>
</evidence>
<evidence type="ECO:0000269" key="9">
    <source>
    </source>
</evidence>
<evidence type="ECO:0000269" key="10">
    <source>
    </source>
</evidence>
<evidence type="ECO:0000269" key="11">
    <source>
    </source>
</evidence>
<evidence type="ECO:0000269" key="12">
    <source>
    </source>
</evidence>
<evidence type="ECO:0000269" key="13">
    <source>
    </source>
</evidence>
<evidence type="ECO:0000269" key="14">
    <source>
    </source>
</evidence>
<evidence type="ECO:0000303" key="15">
    <source>
    </source>
</evidence>
<evidence type="ECO:0000305" key="16"/>
<evidence type="ECO:0007744" key="17">
    <source>
    </source>
</evidence>
<evidence type="ECO:0007744" key="18">
    <source>
    </source>
</evidence>
<evidence type="ECO:0007744" key="19">
    <source>
    </source>
</evidence>
<evidence type="ECO:0007744" key="20">
    <source>
    </source>
</evidence>
<evidence type="ECO:0007744" key="21">
    <source>
    </source>
</evidence>
<evidence type="ECO:0007744" key="22">
    <source>
    </source>
</evidence>
<evidence type="ECO:0007744" key="23">
    <source>
    </source>
</evidence>
<evidence type="ECO:0007744" key="24">
    <source>
    </source>
</evidence>
<evidence type="ECO:0007744" key="25">
    <source>
    </source>
</evidence>
<evidence type="ECO:0007829" key="26">
    <source>
        <dbReference type="PDB" id="7UN6"/>
    </source>
</evidence>
<keyword id="KW-0002">3D-structure</keyword>
<keyword id="KW-0007">Acetylation</keyword>
<keyword id="KW-0025">Alternative splicing</keyword>
<keyword id="KW-0963">Cytoplasm</keyword>
<keyword id="KW-0449">Lipoprotein</keyword>
<keyword id="KW-0488">Methylation</keyword>
<keyword id="KW-0524">Neurogenesis</keyword>
<keyword id="KW-0539">Nucleus</keyword>
<keyword id="KW-0597">Phosphoprotein</keyword>
<keyword id="KW-0636">Prenylation</keyword>
<keyword id="KW-1267">Proteomics identification</keyword>
<keyword id="KW-1185">Reference proteome</keyword>
<name>NP1L1_HUMAN</name>
<organism>
    <name type="scientific">Homo sapiens</name>
    <name type="common">Human</name>
    <dbReference type="NCBI Taxonomy" id="9606"/>
    <lineage>
        <taxon>Eukaryota</taxon>
        <taxon>Metazoa</taxon>
        <taxon>Chordata</taxon>
        <taxon>Craniata</taxon>
        <taxon>Vertebrata</taxon>
        <taxon>Euteleostomi</taxon>
        <taxon>Mammalia</taxon>
        <taxon>Eutheria</taxon>
        <taxon>Euarchontoglires</taxon>
        <taxon>Primates</taxon>
        <taxon>Haplorrhini</taxon>
        <taxon>Catarrhini</taxon>
        <taxon>Hominidae</taxon>
        <taxon>Homo</taxon>
    </lineage>
</organism>
<protein>
    <recommendedName>
        <fullName>Nucleosome assembly protein 1-like 1</fullName>
    </recommendedName>
    <alternativeName>
        <fullName>NAP-1-related protein</fullName>
        <shortName>hNRP</shortName>
    </alternativeName>
</protein>
<sequence>MADIDNKEQSELDQDLDDVEEVEEEETGEETKLKARQLTVQMMQNPQILAALQERLDGLVETPTGYIESLPRVVKRRVNALKNLQVKCAQIEAKFYEEVHDLERKYAVLYQPLFDKRFEIINAIYEPTEEECEWKPDEEDEISEELKEKAKIEDEKKDEEKEDPKGIPEFWLTVFKNVDLLSDMVQEHDEPILKHLKDIKVKFSDAGQPMSFVLEFHFEPNEYFTNEVLTKTYRMRSEPDDSDPFSFDGPEIMGCTGCQIDWKKGKNVTLKTIKKKQKHKGRGTVRTVTKTVSNDSFFNFFAPPEVPESGDLDDDAEAILAADFEIGHFLRERIIPRSVLYFTGEAIEDDDDDYDEEGEEADEEGEEEGDEENDPDYDPKKDQNPAECKQQ</sequence>